<reference key="1">
    <citation type="journal article" date="2012" name="MBio">
        <title>Comparative genome analysis of Trichophyton rubrum and related dermatophytes reveals candidate genes involved in infection.</title>
        <authorList>
            <person name="Martinez D.A."/>
            <person name="Oliver B.G."/>
            <person name="Graeser Y."/>
            <person name="Goldberg J.M."/>
            <person name="Li W."/>
            <person name="Martinez-Rossi N.M."/>
            <person name="Monod M."/>
            <person name="Shelest E."/>
            <person name="Barton R.C."/>
            <person name="Birch E."/>
            <person name="Brakhage A.A."/>
            <person name="Chen Z."/>
            <person name="Gurr S.J."/>
            <person name="Heiman D."/>
            <person name="Heitman J."/>
            <person name="Kosti I."/>
            <person name="Rossi A."/>
            <person name="Saif S."/>
            <person name="Samalova M."/>
            <person name="Saunders C.W."/>
            <person name="Shea T."/>
            <person name="Summerbell R.C."/>
            <person name="Xu J."/>
            <person name="Young S."/>
            <person name="Zeng Q."/>
            <person name="Birren B.W."/>
            <person name="Cuomo C.A."/>
            <person name="White T.C."/>
        </authorList>
    </citation>
    <scope>NUCLEOTIDE SEQUENCE [LARGE SCALE GENOMIC DNA]</scope>
    <source>
        <strain>ATCC MYA-4604 / CBS 118893</strain>
    </source>
</reference>
<dbReference type="EMBL" id="DS989823">
    <property type="protein sequence ID" value="EFQ99130.1"/>
    <property type="molecule type" value="Genomic_DNA"/>
</dbReference>
<dbReference type="RefSeq" id="XP_003174613.1">
    <property type="nucleotide sequence ID" value="XM_003174565.1"/>
</dbReference>
<dbReference type="SMR" id="E4UPZ6"/>
<dbReference type="FunCoup" id="E4UPZ6">
    <property type="interactions" value="828"/>
</dbReference>
<dbReference type="STRING" id="535722.E4UPZ6"/>
<dbReference type="GlyCosmos" id="E4UPZ6">
    <property type="glycosylation" value="1 site, No reported glycans"/>
</dbReference>
<dbReference type="GeneID" id="10029910"/>
<dbReference type="VEuPathDB" id="FungiDB:MGYG_02142"/>
<dbReference type="eggNOG" id="KOG2650">
    <property type="taxonomic scope" value="Eukaryota"/>
</dbReference>
<dbReference type="HOGENOM" id="CLU_019326_1_0_1"/>
<dbReference type="InParanoid" id="E4UPZ6"/>
<dbReference type="OMA" id="WFYHQLH"/>
<dbReference type="OrthoDB" id="3626597at2759"/>
<dbReference type="Proteomes" id="UP000002669">
    <property type="component" value="Unassembled WGS sequence"/>
</dbReference>
<dbReference type="GO" id="GO:0005576">
    <property type="term" value="C:extracellular region"/>
    <property type="evidence" value="ECO:0007669"/>
    <property type="project" value="UniProtKB-SubCell"/>
</dbReference>
<dbReference type="GO" id="GO:0005773">
    <property type="term" value="C:vacuole"/>
    <property type="evidence" value="ECO:0007669"/>
    <property type="project" value="UniProtKB-SubCell"/>
</dbReference>
<dbReference type="GO" id="GO:0008270">
    <property type="term" value="F:zinc ion binding"/>
    <property type="evidence" value="ECO:0007669"/>
    <property type="project" value="InterPro"/>
</dbReference>
<dbReference type="GO" id="GO:0071555">
    <property type="term" value="P:cell wall organization"/>
    <property type="evidence" value="ECO:0007669"/>
    <property type="project" value="UniProtKB-KW"/>
</dbReference>
<dbReference type="GO" id="GO:0006508">
    <property type="term" value="P:proteolysis"/>
    <property type="evidence" value="ECO:0007669"/>
    <property type="project" value="InterPro"/>
</dbReference>
<dbReference type="CDD" id="cd03860">
    <property type="entry name" value="M14_CP_A-B_like"/>
    <property type="match status" value="1"/>
</dbReference>
<dbReference type="FunFam" id="3.40.630.10:FF:000060">
    <property type="entry name" value="Putative metallocarboxypeptidase ecm14"/>
    <property type="match status" value="1"/>
</dbReference>
<dbReference type="Gene3D" id="3.40.630.10">
    <property type="entry name" value="Zn peptidases"/>
    <property type="match status" value="1"/>
</dbReference>
<dbReference type="InterPro" id="IPR000834">
    <property type="entry name" value="Peptidase_M14"/>
</dbReference>
<dbReference type="PANTHER" id="PTHR11705:SF147">
    <property type="entry name" value="INACTIVE METALLOCARBOXYPEPTIDASE ECM14"/>
    <property type="match status" value="1"/>
</dbReference>
<dbReference type="PANTHER" id="PTHR11705">
    <property type="entry name" value="PROTEASE FAMILY M14 CARBOXYPEPTIDASE A,B"/>
    <property type="match status" value="1"/>
</dbReference>
<dbReference type="Pfam" id="PF00246">
    <property type="entry name" value="Peptidase_M14"/>
    <property type="match status" value="1"/>
</dbReference>
<dbReference type="PRINTS" id="PR00765">
    <property type="entry name" value="CRBOXYPTASEA"/>
</dbReference>
<dbReference type="SMART" id="SM00631">
    <property type="entry name" value="Zn_pept"/>
    <property type="match status" value="1"/>
</dbReference>
<dbReference type="SUPFAM" id="SSF53187">
    <property type="entry name" value="Zn-dependent exopeptidases"/>
    <property type="match status" value="1"/>
</dbReference>
<dbReference type="PROSITE" id="PS52035">
    <property type="entry name" value="PEPTIDASE_M14"/>
    <property type="match status" value="1"/>
</dbReference>
<protein>
    <recommendedName>
        <fullName evidence="7">Inactive metallocarboxypeptidase ECM14</fullName>
    </recommendedName>
</protein>
<feature type="signal peptide" evidence="4">
    <location>
        <begin position="1"/>
        <end position="22"/>
    </location>
</feature>
<feature type="propeptide" id="PRO_0000453233" evidence="3">
    <location>
        <begin position="23"/>
        <end position="184"/>
    </location>
</feature>
<feature type="chain" id="PRO_0000411174" description="Inactive metallocarboxypeptidase ECM14">
    <location>
        <begin position="185"/>
        <end position="593"/>
    </location>
</feature>
<feature type="domain" description="Peptidase M14" evidence="5">
    <location>
        <begin position="220"/>
        <end position="546"/>
    </location>
</feature>
<feature type="region of interest" description="Disordered" evidence="6">
    <location>
        <begin position="180"/>
        <end position="210"/>
    </location>
</feature>
<feature type="region of interest" description="Disordered" evidence="6">
    <location>
        <begin position="557"/>
        <end position="593"/>
    </location>
</feature>
<feature type="compositionally biased region" description="Polar residues" evidence="6">
    <location>
        <begin position="182"/>
        <end position="210"/>
    </location>
</feature>
<feature type="compositionally biased region" description="Acidic residues" evidence="6">
    <location>
        <begin position="566"/>
        <end position="581"/>
    </location>
</feature>
<feature type="binding site" evidence="1">
    <location>
        <begin position="285"/>
        <end position="288"/>
    </location>
    <ligand>
        <name>substrate</name>
    </ligand>
</feature>
<feature type="binding site" evidence="5">
    <location>
        <position position="285"/>
    </location>
    <ligand>
        <name>Zn(2+)</name>
        <dbReference type="ChEBI" id="CHEBI:29105"/>
        <note>catalytic</note>
    </ligand>
</feature>
<feature type="binding site" evidence="5">
    <location>
        <position position="288"/>
    </location>
    <ligand>
        <name>Zn(2+)</name>
        <dbReference type="ChEBI" id="CHEBI:29105"/>
        <note>catalytic</note>
    </ligand>
</feature>
<feature type="binding site" evidence="1">
    <location>
        <position position="343"/>
    </location>
    <ligand>
        <name>substrate</name>
    </ligand>
</feature>
<feature type="binding site" evidence="1">
    <location>
        <begin position="360"/>
        <end position="361"/>
    </location>
    <ligand>
        <name>substrate</name>
    </ligand>
</feature>
<feature type="binding site" evidence="5">
    <location>
        <position position="417"/>
    </location>
    <ligand>
        <name>Zn(2+)</name>
        <dbReference type="ChEBI" id="CHEBI:29105"/>
        <note>catalytic</note>
    </ligand>
</feature>
<feature type="binding site" evidence="1">
    <location>
        <begin position="418"/>
        <end position="419"/>
    </location>
    <ligand>
        <name>substrate</name>
    </ligand>
</feature>
<feature type="glycosylation site" description="N-linked (GlcNAc...) asparagine" evidence="4">
    <location>
        <position position="370"/>
    </location>
</feature>
<feature type="disulfide bond" evidence="2">
    <location>
        <begin position="354"/>
        <end position="377"/>
    </location>
</feature>
<sequence>MHFSVRLSLLLTLASSLPLVSAIPQHEDQAYTFPSPGRSATANTDPVLEVGRETQRTPSAWTRLRDSLVESVWGLPQRKEGGEWRTRNQVTTASRAPATLQARYGEDVVLRFTIKTQEEVKALVEASNILFLDVWGSHDDWVDIRLSRDVIPSLLGLLPPSLQSSHVPLIRDLAQTIYESYPKTNPSSPSQQGPTTRRFSPSASTSKTKPQETKNIFFQDYQPLSVLLPWMRLLVSMFSSHATLISVGTTAEGRDIPALRVGVHPTNNAQQAPRRRTIVISGGAHAREWISVSTVSYIAYSFITGYGKSRSITKLLEQFDYVFIPTVNPDGYAYTFSTDRLWRKNRQQTSLSFCPGIDLDHSWGYEWDGNATRSNPCSENYAGDQPFEAIEAREIATWARKEVTVNNVQFVAFVDLHSYSQQILYPYGHSCAHLPANLENLEELGAGLAKAIRKTSRENYDVKAACRGIVASSMGDKDADEAVTSSALESTAGSALDWFYHDMDVRFSYQIKLRDRGSYGFLLPREQIVPTGKEIYRAMVAMGKFLVSPHILTGDLNGPHAAEETQNYDDDFEEDEAEEDSDVFRAQGDDMSS</sequence>
<evidence type="ECO:0000250" key="1">
    <source>
        <dbReference type="UniProtKB" id="P00730"/>
    </source>
</evidence>
<evidence type="ECO:0000250" key="2">
    <source>
        <dbReference type="UniProtKB" id="P15085"/>
    </source>
</evidence>
<evidence type="ECO:0000250" key="3">
    <source>
        <dbReference type="UniProtKB" id="P38836"/>
    </source>
</evidence>
<evidence type="ECO:0000255" key="4"/>
<evidence type="ECO:0000255" key="5">
    <source>
        <dbReference type="PROSITE-ProRule" id="PRU01379"/>
    </source>
</evidence>
<evidence type="ECO:0000256" key="6">
    <source>
        <dbReference type="SAM" id="MobiDB-lite"/>
    </source>
</evidence>
<evidence type="ECO:0000305" key="7"/>
<keyword id="KW-0961">Cell wall biogenesis/degradation</keyword>
<keyword id="KW-1015">Disulfide bond</keyword>
<keyword id="KW-0325">Glycoprotein</keyword>
<keyword id="KW-0479">Metal-binding</keyword>
<keyword id="KW-1185">Reference proteome</keyword>
<keyword id="KW-0964">Secreted</keyword>
<keyword id="KW-0732">Signal</keyword>
<keyword id="KW-0926">Vacuole</keyword>
<keyword id="KW-0862">Zinc</keyword>
<name>ECM14_ARTGP</name>
<gene>
    <name type="primary">ECM14</name>
    <name type="ORF">MGYG_02142</name>
</gene>
<accession>E4UPZ6</accession>
<comment type="function">
    <text evidence="3">Inactive carboxypeptidase that may play a role in cell wall organization and biogenesis.</text>
</comment>
<comment type="cofactor">
    <cofactor evidence="1">
        <name>Zn(2+)</name>
        <dbReference type="ChEBI" id="CHEBI:29105"/>
    </cofactor>
    <text evidence="1">Binds 1 zinc ion per subunit.</text>
</comment>
<comment type="subcellular location">
    <subcellularLocation>
        <location evidence="3">Vacuole</location>
    </subcellularLocation>
    <subcellularLocation>
        <location evidence="3">Secreted</location>
    </subcellularLocation>
</comment>
<comment type="similarity">
    <text evidence="7">Belongs to the peptidase M14 family.</text>
</comment>
<comment type="caution">
    <text evidence="3">Lacks the conserved Glu residue in position 512 essential for carbopeptidase activity. The mature form lacks catalytic activity towards synthetic peptide substrates.</text>
</comment>
<organism>
    <name type="scientific">Arthroderma gypseum (strain ATCC MYA-4604 / CBS 118893)</name>
    <name type="common">Microsporum gypseum</name>
    <dbReference type="NCBI Taxonomy" id="535722"/>
    <lineage>
        <taxon>Eukaryota</taxon>
        <taxon>Fungi</taxon>
        <taxon>Dikarya</taxon>
        <taxon>Ascomycota</taxon>
        <taxon>Pezizomycotina</taxon>
        <taxon>Eurotiomycetes</taxon>
        <taxon>Eurotiomycetidae</taxon>
        <taxon>Onygenales</taxon>
        <taxon>Arthrodermataceae</taxon>
        <taxon>Nannizzia</taxon>
    </lineage>
</organism>
<proteinExistence type="inferred from homology"/>